<keyword id="KW-0687">Ribonucleoprotein</keyword>
<keyword id="KW-0689">Ribosomal protein</keyword>
<comment type="similarity">
    <text evidence="1">Belongs to the bacterial ribosomal protein bL34 family.</text>
</comment>
<gene>
    <name evidence="1" type="primary">rpmH</name>
    <name type="ordered locus">XOO4372</name>
</gene>
<organism>
    <name type="scientific">Xanthomonas oryzae pv. oryzae (strain MAFF 311018)</name>
    <dbReference type="NCBI Taxonomy" id="342109"/>
    <lineage>
        <taxon>Bacteria</taxon>
        <taxon>Pseudomonadati</taxon>
        <taxon>Pseudomonadota</taxon>
        <taxon>Gammaproteobacteria</taxon>
        <taxon>Lysobacterales</taxon>
        <taxon>Lysobacteraceae</taxon>
        <taxon>Xanthomonas</taxon>
    </lineage>
</organism>
<sequence length="46" mass="5310">MATKRTFQPSNLKRARDHGFRARMATADGRKILARRRAKGRKRLSA</sequence>
<accession>Q2NX50</accession>
<proteinExistence type="inferred from homology"/>
<reference key="1">
    <citation type="journal article" date="2005" name="Jpn. Agric. Res. Q.">
        <title>Genome sequence of Xanthomonas oryzae pv. oryzae suggests contribution of large numbers of effector genes and insertion sequences to its race diversity.</title>
        <authorList>
            <person name="Ochiai H."/>
            <person name="Inoue Y."/>
            <person name="Takeya M."/>
            <person name="Sasaki A."/>
            <person name="Kaku H."/>
        </authorList>
    </citation>
    <scope>NUCLEOTIDE SEQUENCE [LARGE SCALE GENOMIC DNA]</scope>
    <source>
        <strain>MAFF 311018</strain>
    </source>
</reference>
<dbReference type="EMBL" id="AP008229">
    <property type="protein sequence ID" value="BAE71127.1"/>
    <property type="molecule type" value="Genomic_DNA"/>
</dbReference>
<dbReference type="RefSeq" id="WP_002805908.1">
    <property type="nucleotide sequence ID" value="NC_007705.1"/>
</dbReference>
<dbReference type="SMR" id="Q2NX50"/>
<dbReference type="GeneID" id="97512525"/>
<dbReference type="KEGG" id="xom:XOO4372"/>
<dbReference type="HOGENOM" id="CLU_129938_2_0_6"/>
<dbReference type="GO" id="GO:1990904">
    <property type="term" value="C:ribonucleoprotein complex"/>
    <property type="evidence" value="ECO:0007669"/>
    <property type="project" value="UniProtKB-KW"/>
</dbReference>
<dbReference type="GO" id="GO:0005840">
    <property type="term" value="C:ribosome"/>
    <property type="evidence" value="ECO:0007669"/>
    <property type="project" value="UniProtKB-KW"/>
</dbReference>
<dbReference type="GO" id="GO:0003735">
    <property type="term" value="F:structural constituent of ribosome"/>
    <property type="evidence" value="ECO:0007669"/>
    <property type="project" value="InterPro"/>
</dbReference>
<dbReference type="GO" id="GO:0006412">
    <property type="term" value="P:translation"/>
    <property type="evidence" value="ECO:0007669"/>
    <property type="project" value="UniProtKB-UniRule"/>
</dbReference>
<dbReference type="FunFam" id="1.10.287.3980:FF:000001">
    <property type="entry name" value="Mitochondrial ribosomal protein L34"/>
    <property type="match status" value="1"/>
</dbReference>
<dbReference type="Gene3D" id="1.10.287.3980">
    <property type="match status" value="1"/>
</dbReference>
<dbReference type="HAMAP" id="MF_00391">
    <property type="entry name" value="Ribosomal_bL34"/>
    <property type="match status" value="1"/>
</dbReference>
<dbReference type="InterPro" id="IPR000271">
    <property type="entry name" value="Ribosomal_bL34"/>
</dbReference>
<dbReference type="InterPro" id="IPR020939">
    <property type="entry name" value="Ribosomal_bL34_CS"/>
</dbReference>
<dbReference type="NCBIfam" id="TIGR01030">
    <property type="entry name" value="rpmH_bact"/>
    <property type="match status" value="1"/>
</dbReference>
<dbReference type="PANTHER" id="PTHR14503:SF4">
    <property type="entry name" value="LARGE RIBOSOMAL SUBUNIT PROTEIN BL34M"/>
    <property type="match status" value="1"/>
</dbReference>
<dbReference type="PANTHER" id="PTHR14503">
    <property type="entry name" value="MITOCHONDRIAL RIBOSOMAL PROTEIN 34 FAMILY MEMBER"/>
    <property type="match status" value="1"/>
</dbReference>
<dbReference type="Pfam" id="PF00468">
    <property type="entry name" value="Ribosomal_L34"/>
    <property type="match status" value="1"/>
</dbReference>
<dbReference type="PROSITE" id="PS00784">
    <property type="entry name" value="RIBOSOMAL_L34"/>
    <property type="match status" value="1"/>
</dbReference>
<evidence type="ECO:0000255" key="1">
    <source>
        <dbReference type="HAMAP-Rule" id="MF_00391"/>
    </source>
</evidence>
<evidence type="ECO:0000256" key="2">
    <source>
        <dbReference type="SAM" id="MobiDB-lite"/>
    </source>
</evidence>
<evidence type="ECO:0000305" key="3"/>
<feature type="chain" id="PRO_1000013493" description="Large ribosomal subunit protein bL34">
    <location>
        <begin position="1"/>
        <end position="46"/>
    </location>
</feature>
<feature type="region of interest" description="Disordered" evidence="2">
    <location>
        <begin position="1"/>
        <end position="46"/>
    </location>
</feature>
<feature type="compositionally biased region" description="Polar residues" evidence="2">
    <location>
        <begin position="1"/>
        <end position="11"/>
    </location>
</feature>
<feature type="compositionally biased region" description="Basic residues" evidence="2">
    <location>
        <begin position="32"/>
        <end position="46"/>
    </location>
</feature>
<name>RL34_XANOM</name>
<protein>
    <recommendedName>
        <fullName evidence="1">Large ribosomal subunit protein bL34</fullName>
    </recommendedName>
    <alternativeName>
        <fullName evidence="3">50S ribosomal protein L34</fullName>
    </alternativeName>
</protein>